<organism>
    <name type="scientific">Clostridium botulinum (strain Hall / ATCC 3502 / NCTC 13319 / Type A)</name>
    <dbReference type="NCBI Taxonomy" id="441771"/>
    <lineage>
        <taxon>Bacteria</taxon>
        <taxon>Bacillati</taxon>
        <taxon>Bacillota</taxon>
        <taxon>Clostridia</taxon>
        <taxon>Eubacteriales</taxon>
        <taxon>Clostridiaceae</taxon>
        <taxon>Clostridium</taxon>
    </lineage>
</organism>
<proteinExistence type="inferred from homology"/>
<comment type="catalytic activity">
    <reaction evidence="1">
        <text>L-glutamine + H2O = L-glutamate + NH4(+)</text>
        <dbReference type="Rhea" id="RHEA:15889"/>
        <dbReference type="ChEBI" id="CHEBI:15377"/>
        <dbReference type="ChEBI" id="CHEBI:28938"/>
        <dbReference type="ChEBI" id="CHEBI:29985"/>
        <dbReference type="ChEBI" id="CHEBI:58359"/>
        <dbReference type="EC" id="3.5.1.2"/>
    </reaction>
</comment>
<comment type="subunit">
    <text evidence="1">Homotetramer.</text>
</comment>
<comment type="similarity">
    <text evidence="1">Belongs to the glutaminase family.</text>
</comment>
<reference key="1">
    <citation type="journal article" date="2007" name="Genome Res.">
        <title>Genome sequence of a proteolytic (Group I) Clostridium botulinum strain Hall A and comparative analysis of the clostridial genomes.</title>
        <authorList>
            <person name="Sebaihia M."/>
            <person name="Peck M.W."/>
            <person name="Minton N.P."/>
            <person name="Thomson N.R."/>
            <person name="Holden M.T.G."/>
            <person name="Mitchell W.J."/>
            <person name="Carter A.T."/>
            <person name="Bentley S.D."/>
            <person name="Mason D.R."/>
            <person name="Crossman L."/>
            <person name="Paul C.J."/>
            <person name="Ivens A."/>
            <person name="Wells-Bennik M.H.J."/>
            <person name="Davis I.J."/>
            <person name="Cerdeno-Tarraga A.M."/>
            <person name="Churcher C."/>
            <person name="Quail M.A."/>
            <person name="Chillingworth T."/>
            <person name="Feltwell T."/>
            <person name="Fraser A."/>
            <person name="Goodhead I."/>
            <person name="Hance Z."/>
            <person name="Jagels K."/>
            <person name="Larke N."/>
            <person name="Maddison M."/>
            <person name="Moule S."/>
            <person name="Mungall K."/>
            <person name="Norbertczak H."/>
            <person name="Rabbinowitsch E."/>
            <person name="Sanders M."/>
            <person name="Simmonds M."/>
            <person name="White B."/>
            <person name="Whithead S."/>
            <person name="Parkhill J."/>
        </authorList>
    </citation>
    <scope>NUCLEOTIDE SEQUENCE [LARGE SCALE GENOMIC DNA]</scope>
    <source>
        <strain>Hall / ATCC 3502 / NCTC 13319 / Type A</strain>
    </source>
</reference>
<reference key="2">
    <citation type="journal article" date="2007" name="PLoS ONE">
        <title>Analysis of the neurotoxin complex genes in Clostridium botulinum A1-A4 and B1 strains: BoNT/A3, /Ba4 and /B1 clusters are located within plasmids.</title>
        <authorList>
            <person name="Smith T.J."/>
            <person name="Hill K.K."/>
            <person name="Foley B.T."/>
            <person name="Detter J.C."/>
            <person name="Munk A.C."/>
            <person name="Bruce D.C."/>
            <person name="Doggett N.A."/>
            <person name="Smith L.A."/>
            <person name="Marks J.D."/>
            <person name="Xie G."/>
            <person name="Brettin T.S."/>
        </authorList>
    </citation>
    <scope>NUCLEOTIDE SEQUENCE [LARGE SCALE GENOMIC DNA]</scope>
    <source>
        <strain>Hall / ATCC 3502 / NCTC 13319 / Type A</strain>
    </source>
</reference>
<name>GLSA_CLOBH</name>
<feature type="chain" id="PRO_1000048331" description="Glutaminase">
    <location>
        <begin position="1"/>
        <end position="305"/>
    </location>
</feature>
<feature type="binding site" evidence="1">
    <location>
        <position position="61"/>
    </location>
    <ligand>
        <name>substrate</name>
    </ligand>
</feature>
<feature type="binding site" evidence="1">
    <location>
        <position position="113"/>
    </location>
    <ligand>
        <name>substrate</name>
    </ligand>
</feature>
<feature type="binding site" evidence="1">
    <location>
        <position position="158"/>
    </location>
    <ligand>
        <name>substrate</name>
    </ligand>
</feature>
<feature type="binding site" evidence="1">
    <location>
        <position position="165"/>
    </location>
    <ligand>
        <name>substrate</name>
    </ligand>
</feature>
<feature type="binding site" evidence="1">
    <location>
        <position position="189"/>
    </location>
    <ligand>
        <name>substrate</name>
    </ligand>
</feature>
<feature type="binding site" evidence="1">
    <location>
        <position position="241"/>
    </location>
    <ligand>
        <name>substrate</name>
    </ligand>
</feature>
<feature type="binding site" evidence="1">
    <location>
        <position position="259"/>
    </location>
    <ligand>
        <name>substrate</name>
    </ligand>
</feature>
<protein>
    <recommendedName>
        <fullName evidence="1">Glutaminase</fullName>
        <ecNumber evidence="1">3.5.1.2</ecNumber>
    </recommendedName>
</protein>
<dbReference type="EC" id="3.5.1.2" evidence="1"/>
<dbReference type="EMBL" id="CP000727">
    <property type="protein sequence ID" value="ABS37420.1"/>
    <property type="molecule type" value="Genomic_DNA"/>
</dbReference>
<dbReference type="EMBL" id="AM412317">
    <property type="protein sequence ID" value="CAL84371.1"/>
    <property type="molecule type" value="Genomic_DNA"/>
</dbReference>
<dbReference type="RefSeq" id="WP_003399984.1">
    <property type="nucleotide sequence ID" value="NC_009698.1"/>
</dbReference>
<dbReference type="RefSeq" id="YP_001255309.1">
    <property type="nucleotide sequence ID" value="NC_009495.1"/>
</dbReference>
<dbReference type="RefSeq" id="YP_001388522.1">
    <property type="nucleotide sequence ID" value="NC_009698.1"/>
</dbReference>
<dbReference type="SMR" id="A5I5P4"/>
<dbReference type="GeneID" id="5185637"/>
<dbReference type="KEGG" id="cbh:CLC_2684"/>
<dbReference type="KEGG" id="cbo:CBO2808"/>
<dbReference type="PATRIC" id="fig|413999.7.peg.2793"/>
<dbReference type="HOGENOM" id="CLU_027932_1_0_9"/>
<dbReference type="PRO" id="PR:A5I5P4"/>
<dbReference type="Proteomes" id="UP000001986">
    <property type="component" value="Chromosome"/>
</dbReference>
<dbReference type="GO" id="GO:0004359">
    <property type="term" value="F:glutaminase activity"/>
    <property type="evidence" value="ECO:0000318"/>
    <property type="project" value="GO_Central"/>
</dbReference>
<dbReference type="GO" id="GO:0006537">
    <property type="term" value="P:glutamate biosynthetic process"/>
    <property type="evidence" value="ECO:0000318"/>
    <property type="project" value="GO_Central"/>
</dbReference>
<dbReference type="GO" id="GO:0006543">
    <property type="term" value="P:glutamine catabolic process"/>
    <property type="evidence" value="ECO:0000318"/>
    <property type="project" value="GO_Central"/>
</dbReference>
<dbReference type="FunFam" id="3.40.710.10:FF:000005">
    <property type="entry name" value="Glutaminase"/>
    <property type="match status" value="1"/>
</dbReference>
<dbReference type="Gene3D" id="3.40.710.10">
    <property type="entry name" value="DD-peptidase/beta-lactamase superfamily"/>
    <property type="match status" value="1"/>
</dbReference>
<dbReference type="HAMAP" id="MF_00313">
    <property type="entry name" value="Glutaminase"/>
    <property type="match status" value="1"/>
</dbReference>
<dbReference type="InterPro" id="IPR012338">
    <property type="entry name" value="Beta-lactam/transpept-like"/>
</dbReference>
<dbReference type="InterPro" id="IPR015868">
    <property type="entry name" value="Glutaminase"/>
</dbReference>
<dbReference type="NCBIfam" id="TIGR03814">
    <property type="entry name" value="Gln_ase"/>
    <property type="match status" value="1"/>
</dbReference>
<dbReference type="PANTHER" id="PTHR12544">
    <property type="entry name" value="GLUTAMINASE"/>
    <property type="match status" value="1"/>
</dbReference>
<dbReference type="PANTHER" id="PTHR12544:SF29">
    <property type="entry name" value="GLUTAMINASE"/>
    <property type="match status" value="1"/>
</dbReference>
<dbReference type="Pfam" id="PF04960">
    <property type="entry name" value="Glutaminase"/>
    <property type="match status" value="1"/>
</dbReference>
<dbReference type="SUPFAM" id="SSF56601">
    <property type="entry name" value="beta-lactamase/transpeptidase-like"/>
    <property type="match status" value="1"/>
</dbReference>
<keyword id="KW-0378">Hydrolase</keyword>
<keyword id="KW-1185">Reference proteome</keyword>
<accession>A5I5P4</accession>
<accession>A7G6V7</accession>
<evidence type="ECO:0000255" key="1">
    <source>
        <dbReference type="HAMAP-Rule" id="MF_00313"/>
    </source>
</evidence>
<gene>
    <name evidence="1" type="primary">glsA</name>
    <name type="ordered locus">CBO2808</name>
    <name type="ordered locus">CLC_2684</name>
</gene>
<sequence>MNRLLKTIIENNRKWISEGKVASYIPELSKMDKNLLGISVCTLGGEEYWEGDAEVKFTIQSISKIVTLMLAIIDNGEDYVFSKVGMEPTETAFNSIVNLEAKESHKPINPMINAGAIVVASMVAGKDSDEKFDRILKFTRKISGNNDIDINLNVYESEKETGHRNRALAYFMKSTGALKGNVEEILDVYFKQCSIEITCKDLARIGVMLANDGVSPYTGDRIVPRHVARIVKTIMVTCGMYDASGNFAVHIGIPAKSGVGGGIIACAPRRMGIGVLGTALDEKGNSIAGTKILEELSKQLDLSIF</sequence>